<comment type="function">
    <text evidence="1">This protein binds specifically to 23S rRNA; its binding is stimulated by other ribosomal proteins, e.g. L4, L17, and L20. It is important during the early stages of 50S assembly. It makes multiple contacts with different domains of the 23S rRNA in the assembled 50S subunit and ribosome (By similarity).</text>
</comment>
<comment type="function">
    <text evidence="1">The globular domain of the protein is located near the polypeptide exit tunnel on the outside of the subunit, while an extended beta-hairpin is found that lines the wall of the exit tunnel in the center of the 70S ribosome.</text>
</comment>
<comment type="subunit">
    <text evidence="1">Part of the 50S ribosomal subunit.</text>
</comment>
<comment type="similarity">
    <text evidence="1">Belongs to the universal ribosomal protein uL22 family.</text>
</comment>
<reference key="1">
    <citation type="journal article" date="2001" name="Proc. Natl. Acad. Sci. U.S.A.">
        <title>Genome sequence of an industrial microorganism Streptomyces avermitilis: deducing the ability of producing secondary metabolites.</title>
        <authorList>
            <person name="Omura S."/>
            <person name="Ikeda H."/>
            <person name="Ishikawa J."/>
            <person name="Hanamoto A."/>
            <person name="Takahashi C."/>
            <person name="Shinose M."/>
            <person name="Takahashi Y."/>
            <person name="Horikawa H."/>
            <person name="Nakazawa H."/>
            <person name="Osonoe T."/>
            <person name="Kikuchi H."/>
            <person name="Shiba T."/>
            <person name="Sakaki Y."/>
            <person name="Hattori M."/>
        </authorList>
    </citation>
    <scope>NUCLEOTIDE SEQUENCE [LARGE SCALE GENOMIC DNA]</scope>
    <source>
        <strain>ATCC 31267 / DSM 46492 / JCM 5070 / NBRC 14893 / NCIMB 12804 / NRRL 8165 / MA-4680</strain>
    </source>
</reference>
<reference key="2">
    <citation type="journal article" date="2003" name="Nat. Biotechnol.">
        <title>Complete genome sequence and comparative analysis of the industrial microorganism Streptomyces avermitilis.</title>
        <authorList>
            <person name="Ikeda H."/>
            <person name="Ishikawa J."/>
            <person name="Hanamoto A."/>
            <person name="Shinose M."/>
            <person name="Kikuchi H."/>
            <person name="Shiba T."/>
            <person name="Sakaki Y."/>
            <person name="Hattori M."/>
            <person name="Omura S."/>
        </authorList>
    </citation>
    <scope>NUCLEOTIDE SEQUENCE [LARGE SCALE GENOMIC DNA]</scope>
    <source>
        <strain>ATCC 31267 / DSM 46492 / JCM 5070 / NBRC 14893 / NCIMB 12804 / NRRL 8165 / MA-4680</strain>
    </source>
</reference>
<proteinExistence type="inferred from homology"/>
<dbReference type="EMBL" id="BA000030">
    <property type="protein sequence ID" value="BAC72643.1"/>
    <property type="molecule type" value="Genomic_DNA"/>
</dbReference>
<dbReference type="RefSeq" id="WP_003974262.1">
    <property type="nucleotide sequence ID" value="NZ_JZJK01000077.1"/>
</dbReference>
<dbReference type="SMR" id="Q82DP0"/>
<dbReference type="GeneID" id="97462953"/>
<dbReference type="KEGG" id="sma:SAVERM_4931"/>
<dbReference type="eggNOG" id="COG0091">
    <property type="taxonomic scope" value="Bacteria"/>
</dbReference>
<dbReference type="HOGENOM" id="CLU_083987_3_3_11"/>
<dbReference type="OrthoDB" id="9805969at2"/>
<dbReference type="Proteomes" id="UP000000428">
    <property type="component" value="Chromosome"/>
</dbReference>
<dbReference type="GO" id="GO:0022625">
    <property type="term" value="C:cytosolic large ribosomal subunit"/>
    <property type="evidence" value="ECO:0007669"/>
    <property type="project" value="TreeGrafter"/>
</dbReference>
<dbReference type="GO" id="GO:0019843">
    <property type="term" value="F:rRNA binding"/>
    <property type="evidence" value="ECO:0007669"/>
    <property type="project" value="UniProtKB-UniRule"/>
</dbReference>
<dbReference type="GO" id="GO:0003735">
    <property type="term" value="F:structural constituent of ribosome"/>
    <property type="evidence" value="ECO:0007669"/>
    <property type="project" value="InterPro"/>
</dbReference>
<dbReference type="GO" id="GO:0006412">
    <property type="term" value="P:translation"/>
    <property type="evidence" value="ECO:0007669"/>
    <property type="project" value="UniProtKB-UniRule"/>
</dbReference>
<dbReference type="CDD" id="cd00336">
    <property type="entry name" value="Ribosomal_L22"/>
    <property type="match status" value="1"/>
</dbReference>
<dbReference type="FunFam" id="3.90.470.10:FF:000002">
    <property type="entry name" value="50S ribosomal protein L22"/>
    <property type="match status" value="1"/>
</dbReference>
<dbReference type="Gene3D" id="3.90.470.10">
    <property type="entry name" value="Ribosomal protein L22/L17"/>
    <property type="match status" value="1"/>
</dbReference>
<dbReference type="HAMAP" id="MF_01331_B">
    <property type="entry name" value="Ribosomal_uL22_B"/>
    <property type="match status" value="1"/>
</dbReference>
<dbReference type="InterPro" id="IPR001063">
    <property type="entry name" value="Ribosomal_uL22"/>
</dbReference>
<dbReference type="InterPro" id="IPR005727">
    <property type="entry name" value="Ribosomal_uL22_bac/chlpt-type"/>
</dbReference>
<dbReference type="InterPro" id="IPR047867">
    <property type="entry name" value="Ribosomal_uL22_bac/org-type"/>
</dbReference>
<dbReference type="InterPro" id="IPR018260">
    <property type="entry name" value="Ribosomal_uL22_CS"/>
</dbReference>
<dbReference type="InterPro" id="IPR036394">
    <property type="entry name" value="Ribosomal_uL22_sf"/>
</dbReference>
<dbReference type="NCBIfam" id="TIGR01044">
    <property type="entry name" value="rplV_bact"/>
    <property type="match status" value="1"/>
</dbReference>
<dbReference type="PANTHER" id="PTHR13501">
    <property type="entry name" value="CHLOROPLAST 50S RIBOSOMAL PROTEIN L22-RELATED"/>
    <property type="match status" value="1"/>
</dbReference>
<dbReference type="PANTHER" id="PTHR13501:SF8">
    <property type="entry name" value="LARGE RIBOSOMAL SUBUNIT PROTEIN UL22M"/>
    <property type="match status" value="1"/>
</dbReference>
<dbReference type="Pfam" id="PF00237">
    <property type="entry name" value="Ribosomal_L22"/>
    <property type="match status" value="1"/>
</dbReference>
<dbReference type="SUPFAM" id="SSF54843">
    <property type="entry name" value="Ribosomal protein L22"/>
    <property type="match status" value="1"/>
</dbReference>
<dbReference type="PROSITE" id="PS00464">
    <property type="entry name" value="RIBOSOMAL_L22"/>
    <property type="match status" value="1"/>
</dbReference>
<gene>
    <name evidence="1" type="primary">rplV</name>
    <name type="ordered locus">SAV_4931</name>
</gene>
<organism>
    <name type="scientific">Streptomyces avermitilis (strain ATCC 31267 / DSM 46492 / JCM 5070 / NBRC 14893 / NCIMB 12804 / NRRL 8165 / MA-4680)</name>
    <dbReference type="NCBI Taxonomy" id="227882"/>
    <lineage>
        <taxon>Bacteria</taxon>
        <taxon>Bacillati</taxon>
        <taxon>Actinomycetota</taxon>
        <taxon>Actinomycetes</taxon>
        <taxon>Kitasatosporales</taxon>
        <taxon>Streptomycetaceae</taxon>
        <taxon>Streptomyces</taxon>
    </lineage>
</organism>
<evidence type="ECO:0000255" key="1">
    <source>
        <dbReference type="HAMAP-Rule" id="MF_01331"/>
    </source>
</evidence>
<evidence type="ECO:0000305" key="2"/>
<feature type="chain" id="PRO_0000125233" description="Large ribosomal subunit protein uL22">
    <location>
        <begin position="1"/>
        <end position="115"/>
    </location>
</feature>
<keyword id="KW-1185">Reference proteome</keyword>
<keyword id="KW-0687">Ribonucleoprotein</keyword>
<keyword id="KW-0689">Ribosomal protein</keyword>
<keyword id="KW-0694">RNA-binding</keyword>
<keyword id="KW-0699">rRNA-binding</keyword>
<name>RL22_STRAW</name>
<accession>Q82DP0</accession>
<sequence length="115" mass="12796">MEARAQARYIRVTPMKARRVVDLIRGMDATEAQAVLRFAPQAASVPVGKVLDSAIANAAHNYDHTDADSLFISEAYVDEGPTLKRFRPRAQGRAYRIRKRTSHITVVVSSKEGTR</sequence>
<protein>
    <recommendedName>
        <fullName evidence="1">Large ribosomal subunit protein uL22</fullName>
    </recommendedName>
    <alternativeName>
        <fullName evidence="2">50S ribosomal protein L22</fullName>
    </alternativeName>
</protein>